<name>NO40_LOTJA</name>
<keyword id="KW-0536">Nodulation</keyword>
<dbReference type="EMBL" id="AF013594">
    <property type="protein sequence ID" value="AAB82785.1"/>
    <property type="molecule type" value="Genomic_DNA"/>
</dbReference>
<dbReference type="GO" id="GO:0009877">
    <property type="term" value="P:nodulation"/>
    <property type="evidence" value="ECO:0007669"/>
    <property type="project" value="UniProtKB-KW"/>
</dbReference>
<dbReference type="InterPro" id="IPR013186">
    <property type="entry name" value="ENOD40"/>
</dbReference>
<dbReference type="Pfam" id="PF08247">
    <property type="entry name" value="ENOD40"/>
    <property type="match status" value="1"/>
</dbReference>
<protein>
    <recommendedName>
        <fullName>Early nodulin-40</fullName>
    </recommendedName>
</protein>
<accession>O22426</accession>
<comment type="function">
    <text evidence="1">Modulates the action of auxin, and may function as plant growth regulator that alters phytohormone responses.</text>
</comment>
<comment type="developmental stage">
    <text>Expressed in the early stages of the nodule development.</text>
</comment>
<gene>
    <name type="primary">ENOD40</name>
</gene>
<sequence length="12" mass="1480">MRFCWQKSIHGS</sequence>
<feature type="peptide" id="PRO_0000044076" description="Early nodulin-40">
    <location>
        <begin position="1"/>
        <end position="12"/>
    </location>
</feature>
<reference key="1">
    <citation type="online journal article" date="1997" name="Plant Gene Register">
        <title>Isolation and Primary characterization of genomic Enod40 gene from Lotus japonicus cultivar 'Gifu'.</title>
        <authorList>
            <person name="Chian R.-J."/>
            <person name="Gresshoff P.M."/>
        </authorList>
        <locator>PGR97-142</locator>
    </citation>
    <scope>NUCLEOTIDE SEQUENCE [GENOMIC DNA]</scope>
    <source>
        <strain>cv. Gifu</strain>
    </source>
</reference>
<organism>
    <name type="scientific">Lotus japonicus</name>
    <name type="common">Lotus corniculatus var. japonicus</name>
    <dbReference type="NCBI Taxonomy" id="34305"/>
    <lineage>
        <taxon>Eukaryota</taxon>
        <taxon>Viridiplantae</taxon>
        <taxon>Streptophyta</taxon>
        <taxon>Embryophyta</taxon>
        <taxon>Tracheophyta</taxon>
        <taxon>Spermatophyta</taxon>
        <taxon>Magnoliopsida</taxon>
        <taxon>eudicotyledons</taxon>
        <taxon>Gunneridae</taxon>
        <taxon>Pentapetalae</taxon>
        <taxon>rosids</taxon>
        <taxon>fabids</taxon>
        <taxon>Fabales</taxon>
        <taxon>Fabaceae</taxon>
        <taxon>Papilionoideae</taxon>
        <taxon>50 kb inversion clade</taxon>
        <taxon>NPAAA clade</taxon>
        <taxon>Hologalegina</taxon>
        <taxon>robinioid clade</taxon>
        <taxon>Loteae</taxon>
        <taxon>Lotus</taxon>
    </lineage>
</organism>
<evidence type="ECO:0000250" key="1"/>
<proteinExistence type="evidence at transcript level"/>